<name>PHOSP_MUMPS</name>
<accession>P60166</accession>
<proteinExistence type="inferred from homology"/>
<organismHost>
    <name type="scientific">Homo sapiens</name>
    <name type="common">Human</name>
    <dbReference type="NCBI Taxonomy" id="9606"/>
</organismHost>
<keyword id="KW-0175">Coiled coil</keyword>
<keyword id="KW-0597">Phosphoprotein</keyword>
<keyword id="KW-0691">RNA editing</keyword>
<keyword id="KW-0693">Viral RNA replication</keyword>
<evidence type="ECO:0000250" key="1">
    <source>
        <dbReference type="UniProtKB" id="C0JJ97"/>
    </source>
</evidence>
<evidence type="ECO:0000250" key="2">
    <source>
        <dbReference type="UniProtKB" id="F8V2V0"/>
    </source>
</evidence>
<evidence type="ECO:0000250" key="3">
    <source>
        <dbReference type="UniProtKB" id="P06162"/>
    </source>
</evidence>
<evidence type="ECO:0000250" key="4">
    <source>
        <dbReference type="UniProtKB" id="P16072"/>
    </source>
</evidence>
<evidence type="ECO:0000250" key="5">
    <source>
        <dbReference type="UniProtKB" id="Q77M42"/>
    </source>
</evidence>
<evidence type="ECO:0000250" key="6">
    <source>
        <dbReference type="UniProtKB" id="Q9WMB4"/>
    </source>
</evidence>
<evidence type="ECO:0000255" key="7"/>
<evidence type="ECO:0000256" key="8">
    <source>
        <dbReference type="SAM" id="MobiDB-lite"/>
    </source>
</evidence>
<evidence type="ECO:0000269" key="9">
    <source>
    </source>
</evidence>
<evidence type="ECO:0000305" key="10"/>
<dbReference type="EMBL" id="D00663">
    <property type="status" value="NOT_ANNOTATED_CDS"/>
    <property type="molecule type" value="Genomic_RNA"/>
</dbReference>
<dbReference type="SMR" id="P60166"/>
<dbReference type="CDD" id="cd21031">
    <property type="entry name" value="MEV_P-protein-C_like"/>
    <property type="match status" value="1"/>
</dbReference>
<dbReference type="Gene3D" id="1.20.5.300">
    <property type="match status" value="1"/>
</dbReference>
<dbReference type="Gene3D" id="1.10.8.10">
    <property type="entry name" value="DNA helicase RuvA subunit, C-terminal domain"/>
    <property type="match status" value="1"/>
</dbReference>
<dbReference type="InterPro" id="IPR004897">
    <property type="entry name" value="P/V_Pprotein_paramyxoviral"/>
</dbReference>
<dbReference type="Pfam" id="PF03210">
    <property type="entry name" value="Paramyx_P_V_C"/>
    <property type="match status" value="1"/>
</dbReference>
<feature type="chain" id="PRO_0000142695" description="Phosphoprotein">
    <location>
        <begin position="1"/>
        <end position="391"/>
    </location>
</feature>
<feature type="region of interest" description="Disordered" evidence="8">
    <location>
        <begin position="54"/>
        <end position="97"/>
    </location>
</feature>
<feature type="region of interest" description="Disordered" evidence="8">
    <location>
        <begin position="148"/>
        <end position="185"/>
    </location>
</feature>
<feature type="region of interest" description="Multimerization" evidence="5">
    <location>
        <begin position="216"/>
        <end position="279"/>
    </location>
</feature>
<feature type="region of interest" description="Interaction with the nucleoprotein" evidence="1">
    <location>
        <begin position="343"/>
        <end position="391"/>
    </location>
</feature>
<feature type="coiled-coil region" evidence="7">
    <location>
        <begin position="218"/>
        <end position="245"/>
    </location>
</feature>
<feature type="compositionally biased region" description="Polar residues" evidence="8">
    <location>
        <begin position="54"/>
        <end position="65"/>
    </location>
</feature>
<feature type="modified residue" description="Phosphothreonine" evidence="2">
    <location>
        <position position="10"/>
    </location>
</feature>
<feature type="modified residue" description="Phosphothreonine" evidence="2">
    <location>
        <position position="16"/>
    </location>
</feature>
<feature type="modified residue" description="Phosphoserine" evidence="2">
    <location>
        <position position="69"/>
    </location>
</feature>
<feature type="modified residue" description="Phosphothreonine" evidence="2">
    <location>
        <position position="91"/>
    </location>
</feature>
<feature type="modified residue" description="Phosphothreonine" evidence="2">
    <location>
        <position position="150"/>
    </location>
</feature>
<feature type="modified residue" description="Phosphothreonine" evidence="2">
    <location>
        <position position="165"/>
    </location>
</feature>
<feature type="modified residue" description="Phosphoserine" evidence="2">
    <location>
        <position position="188"/>
    </location>
</feature>
<feature type="modified residue" description="Phosphothreonine" evidence="2">
    <location>
        <position position="250"/>
    </location>
</feature>
<feature type="modified residue" description="Phosphoserine" evidence="2">
    <location>
        <position position="257"/>
    </location>
</feature>
<feature type="modified residue" description="Phosphothreonine" evidence="2">
    <location>
        <position position="258"/>
    </location>
</feature>
<feature type="modified residue" description="Phosphothreonine" evidence="2">
    <location>
        <position position="282"/>
    </location>
</feature>
<feature type="modified residue" description="Phosphoserine" evidence="4">
    <location>
        <position position="292"/>
    </location>
</feature>
<feature type="modified residue" description="Phosphoserine" evidence="4">
    <location>
        <position position="294"/>
    </location>
</feature>
<feature type="modified residue" description="Phosphothreonine" evidence="4">
    <location>
        <position position="298"/>
    </location>
</feature>
<feature type="modified residue" description="Phosphoserine" evidence="4">
    <location>
        <position position="301"/>
    </location>
</feature>
<feature type="modified residue" description="Phosphoserine" evidence="2">
    <location>
        <position position="374"/>
    </location>
</feature>
<feature type="modified residue" description="Phosphothreonine" evidence="2">
    <location>
        <position position="375"/>
    </location>
</feature>
<sequence>MDQFIKQDETGDLIETGMNVANHFLSAPIQGTNSLSKASIIPGVAPVLIGNPEQKNIQHPTASHQGSKSKGSGSGVRSIIVPPSEAGNGGTQDPEPLFAQTGQGGIVTTVYQDPTIQPTGSSRSVELAKIGKERMINRFVEKPRISTPVTEFKRGGPGAAAQGQTIQEEGIDGNGASAGSKERSGSLSGATLYAHLSLPQQDSTPANVGIAPQSAISANEIMDLLRGMDARLQHLEQKVDKVLAQGSMVTQIKNELSTVKTTLATIEGMMATVKIMDPGNPTGVPVDELRRSFSDHVTIVSGPGDVPFSSSEEPTLYLDELARPVSKPRPAKQTKPQPVKDLAGRKVMITKMITDCVANPQMKQAFEQRLAKASTEDALNDIKRDIIRSAI</sequence>
<reference key="1">
    <citation type="journal article" date="1990" name="J. Gen. Virol.">
        <title>Strain-variable editing during transcription of the P gene of mumps virus may lead to the generation of non-structural proteins NS1 (V) and NS2.</title>
        <authorList>
            <person name="Elliott G.D."/>
            <person name="Yeo R.P."/>
            <person name="Afzal M.A."/>
            <person name="Simpson E.J.B."/>
            <person name="Curran J.A."/>
            <person name="Rima B.K."/>
        </authorList>
    </citation>
    <scope>NUCLEOTIDE SEQUENCE [GENOMIC RNA]</scope>
    <scope>RNA EDITING</scope>
</reference>
<protein>
    <recommendedName>
        <fullName>Phosphoprotein</fullName>
        <shortName>Protein P</shortName>
    </recommendedName>
</protein>
<comment type="function">
    <text evidence="3 4">Essential cofactor of the RNA polymerase L that plays a central role in the transcription and replication by forming the polymerase complex with RNA polymerase L and recruiting L to the genomic N-RNA template for RNA synthesis (By similarity). Also plays a central role in the encapsidation of nascent RNA chains by forming the encapsidation complex with the nucleocapsid protein N (N-P complex). Acts as a chaperone for newly synthesized free N protein, so-called N0, allowing encapsidation of nascent RNA chains during replication (By similarity). The nucleoprotein protein N prevents excessive phosphorylation of P, which leads to down-regulation of viral transcription/ replication. Participates, together with N, in the formation of viral factories (viroplasms), which are large inclusions in the host cytoplasm where replication takes place (By similarity).</text>
</comment>
<comment type="subunit">
    <text evidence="1 4 5">Homotetramer (By similarity). Interacts (via multimerization domain) with polymerase L; this interaction forms the polymerase L-P complex (By similarity). Interacts (via N-terminus) with N0 (via Ncore); this interaction allows P to chaperon N0 to avoid N polymerization before encapsidation (By similarity). Interacts (via C-terminus) with N-RNA template; this interaction positions the polymerase on the template for both transcription and replication (By similarity). Interacts with host RPS6KB1 kinase; this interaction may play a role in the viral replication and transcription (By similarity).</text>
</comment>
<comment type="domain">
    <text evidence="1 6">The N-terminus consists of a long intrinsically disordered tail. The central part contains the coiled-coil multimerization domain (MD or OD) (By similarity). Forms a four-stranded coiled coil structure (By similarity). The C-terminus constitutes the alpha-helical X domain (XD) that binds to the nucleocapsid (N-RNA complex) and the L polymerase (By similarity).</text>
</comment>
<comment type="RNA editing">
    <location>
        <position position="155" evidence="9"/>
    </location>
    <text>Partially edited. RNA editing at this position consists of an insertion of 2 or 4 guanine nucleotides. The sequence displayed here is the P protein, derived from the edited RNA (+ 2 nucleotides). The unedited RNA gives rise to the V protein (AC P33483). The edited RNA (+ 4 nucleotide) gives rise to the I protein.</text>
</comment>
<comment type="similarity">
    <text evidence="10">Belongs to the rubulavirus/avulavirus P protein family.</text>
</comment>
<gene>
    <name type="primary">P/V</name>
</gene>
<organism>
    <name type="scientific">Mumps virus (strain SBL)</name>
    <name type="common">MuV</name>
    <dbReference type="NCBI Taxonomy" id="33729"/>
    <lineage>
        <taxon>Viruses</taxon>
        <taxon>Riboviria</taxon>
        <taxon>Orthornavirae</taxon>
        <taxon>Negarnaviricota</taxon>
        <taxon>Haploviricotina</taxon>
        <taxon>Monjiviricetes</taxon>
        <taxon>Mononegavirales</taxon>
        <taxon>Paramyxoviridae</taxon>
        <taxon>Rubulavirinae</taxon>
        <taxon>Orthorubulavirus</taxon>
        <taxon>Orthorubulavirus parotitidis</taxon>
        <taxon>Mumps orthorubulavirus</taxon>
    </lineage>
</organism>